<accession>P85271</accession>
<feature type="chain" id="PRO_0000302123" description="U4-ctenitoxin-Co1b">
    <location>
        <begin position="1"/>
        <end position="24" status="greater than"/>
    </location>
</feature>
<feature type="non-terminal residue">
    <location>
        <position position="24"/>
    </location>
</feature>
<sequence length="24" mass="2668">SCIKHGDFCDGDNDDCQCCRDNGF</sequence>
<evidence type="ECO:0000250" key="1"/>
<evidence type="ECO:0000250" key="2">
    <source>
        <dbReference type="UniProtKB" id="P81790"/>
    </source>
</evidence>
<evidence type="ECO:0000269" key="3">
    <source ref="1"/>
</evidence>
<evidence type="ECO:0000305" key="4"/>
<keyword id="KW-0108">Calcium channel impairing toxin</keyword>
<keyword id="KW-0903">Direct protein sequencing</keyword>
<keyword id="KW-1015">Disulfide bond</keyword>
<keyword id="KW-0872">Ion channel impairing toxin</keyword>
<keyword id="KW-0528">Neurotoxin</keyword>
<keyword id="KW-0964">Secreted</keyword>
<keyword id="KW-0800">Toxin</keyword>
<keyword id="KW-1218">Voltage-gated calcium channel impairing toxin</keyword>
<protein>
    <recommendedName>
        <fullName>U4-ctenitoxin-Co1b</fullName>
        <shortName>U4-CNTX-Co1b</shortName>
    </recommendedName>
    <alternativeName>
        <fullName>Neurotoxin Oc F29-9-1</fullName>
    </alternativeName>
</protein>
<reference evidence="4" key="1">
    <citation type="submission" date="2007-07" db="UniProtKB">
        <authorList>
            <person name="Borges M.H."/>
            <person name="Oliveira C.F.B."/>
            <person name="Goncalves J.M."/>
            <person name="Rates B."/>
            <person name="Santos D.M."/>
            <person name="Pimenta A.M.C."/>
            <person name="Cordeiro M.N."/>
            <person name="Richardson M."/>
        </authorList>
    </citation>
    <scope>PROTEIN SEQUENCE</scope>
    <scope>SUBCELLULAR LOCATION</scope>
    <scope>TISSUE SPECIFICITY</scope>
    <scope>MASS SPECTROMETRY</scope>
    <source>
        <tissue>Venom</tissue>
    </source>
</reference>
<dbReference type="ArachnoServer" id="AS000317">
    <property type="toxin name" value="U4-ctenitoxin-Co1b"/>
</dbReference>
<dbReference type="GO" id="GO:0005576">
    <property type="term" value="C:extracellular region"/>
    <property type="evidence" value="ECO:0007669"/>
    <property type="project" value="UniProtKB-SubCell"/>
</dbReference>
<dbReference type="GO" id="GO:0005246">
    <property type="term" value="F:calcium channel regulator activity"/>
    <property type="evidence" value="ECO:0007669"/>
    <property type="project" value="UniProtKB-KW"/>
</dbReference>
<dbReference type="GO" id="GO:0090729">
    <property type="term" value="F:toxin activity"/>
    <property type="evidence" value="ECO:0007669"/>
    <property type="project" value="UniProtKB-KW"/>
</dbReference>
<dbReference type="InterPro" id="IPR013605">
    <property type="entry name" value="Toxin_34"/>
</dbReference>
<dbReference type="Pfam" id="PF08396">
    <property type="entry name" value="Toxin_34"/>
    <property type="match status" value="1"/>
</dbReference>
<proteinExistence type="evidence at protein level"/>
<organism>
    <name type="scientific">Ctenus ornatus</name>
    <name type="common">Brazilian spider</name>
    <name type="synonym">Oligoctenus ornatus</name>
    <dbReference type="NCBI Taxonomy" id="406443"/>
    <lineage>
        <taxon>Eukaryota</taxon>
        <taxon>Metazoa</taxon>
        <taxon>Ecdysozoa</taxon>
        <taxon>Arthropoda</taxon>
        <taxon>Chelicerata</taxon>
        <taxon>Arachnida</taxon>
        <taxon>Araneae</taxon>
        <taxon>Araneomorphae</taxon>
        <taxon>Entelegynae</taxon>
        <taxon>Lycosoidea</taxon>
        <taxon>Ctenidae</taxon>
        <taxon>Oligoctenus</taxon>
    </lineage>
</organism>
<name>TXF91_CTEON</name>
<comment type="function">
    <text evidence="1">Omega-agatoxins are antagonists of voltage-gated calcium channels (Cav).</text>
</comment>
<comment type="subcellular location">
    <subcellularLocation>
        <location evidence="3">Secreted</location>
    </subcellularLocation>
</comment>
<comment type="tissue specificity">
    <text evidence="3">Expressed by the venom gland.</text>
</comment>
<comment type="PTM">
    <text evidence="2">Disulfide bonds are present.</text>
</comment>
<comment type="mass spectrometry" mass="8594.0" error="0.86" method="Electrospray" evidence="3"/>
<comment type="similarity">
    <text evidence="4">Belongs to the neurotoxin 04 (omega-agtx) family. 03 (type II/III omega-agtx) subfamily.</text>
</comment>